<evidence type="ECO:0000255" key="1">
    <source>
        <dbReference type="HAMAP-Rule" id="MF_02017"/>
    </source>
</evidence>
<evidence type="ECO:0000256" key="2">
    <source>
        <dbReference type="SAM" id="MobiDB-lite"/>
    </source>
</evidence>
<comment type="function">
    <text evidence="1">Cytoskeletal protein that is involved in cell-shape control through regulation of the length of the long axis.</text>
</comment>
<comment type="subcellular location">
    <subcellularLocation>
        <location evidence="1">Cell inner membrane</location>
        <topology evidence="1">Single-pass type II membrane protein</topology>
    </subcellularLocation>
    <text evidence="1">Forms helical filaments along the long axis of the cell.</text>
</comment>
<comment type="domain">
    <text evidence="1">The helix-turn-helix (HTH) motif in the cytoplasmic domain of the N-terminus is involved in the formation of spirals to maintain the rigid rod shape. As this protein is anchored in the cytoplasmic membrane, the HTH motif may contribute to protein-protein interactions to form the RodZ helix, which is localized beneath the cytoplasmic membrane. The C-terminal domain may be critical for determination of the rod shape by probably interacting with enzymes required for synthesis of the peptidoglycan layer, including PBPs in the periplasm.</text>
</comment>
<comment type="similarity">
    <text evidence="1">Belongs to the RodZ family.</text>
</comment>
<keyword id="KW-0997">Cell inner membrane</keyword>
<keyword id="KW-1003">Cell membrane</keyword>
<keyword id="KW-0133">Cell shape</keyword>
<keyword id="KW-0238">DNA-binding</keyword>
<keyword id="KW-0472">Membrane</keyword>
<keyword id="KW-0735">Signal-anchor</keyword>
<keyword id="KW-0812">Transmembrane</keyword>
<keyword id="KW-1133">Transmembrane helix</keyword>
<name>RODZ_ECOUT</name>
<protein>
    <recommendedName>
        <fullName evidence="1">Cytoskeleton protein RodZ</fullName>
    </recommendedName>
</protein>
<gene>
    <name evidence="1" type="primary">rodZ</name>
    <name type="ordered locus">UTI89_C2837</name>
</gene>
<accession>Q1R8L7</accession>
<reference key="1">
    <citation type="journal article" date="2006" name="Proc. Natl. Acad. Sci. U.S.A.">
        <title>Identification of genes subject to positive selection in uropathogenic strains of Escherichia coli: a comparative genomics approach.</title>
        <authorList>
            <person name="Chen S.L."/>
            <person name="Hung C.-S."/>
            <person name="Xu J."/>
            <person name="Reigstad C.S."/>
            <person name="Magrini V."/>
            <person name="Sabo A."/>
            <person name="Blasiar D."/>
            <person name="Bieri T."/>
            <person name="Meyer R.R."/>
            <person name="Ozersky P."/>
            <person name="Armstrong J.R."/>
            <person name="Fulton R.S."/>
            <person name="Latreille J.P."/>
            <person name="Spieth J."/>
            <person name="Hooton T.M."/>
            <person name="Mardis E.R."/>
            <person name="Hultgren S.J."/>
            <person name="Gordon J.I."/>
        </authorList>
    </citation>
    <scope>NUCLEOTIDE SEQUENCE [LARGE SCALE GENOMIC DNA]</scope>
    <source>
        <strain>UTI89 / UPEC</strain>
    </source>
</reference>
<proteinExistence type="inferred from homology"/>
<dbReference type="EMBL" id="CP000243">
    <property type="protein sequence ID" value="ABE08297.1"/>
    <property type="molecule type" value="Genomic_DNA"/>
</dbReference>
<dbReference type="RefSeq" id="WP_001090835.1">
    <property type="nucleotide sequence ID" value="NZ_CP064825.1"/>
</dbReference>
<dbReference type="SMR" id="Q1R8L7"/>
<dbReference type="KEGG" id="eci:UTI89_C2837"/>
<dbReference type="HOGENOM" id="CLU_047530_3_1_6"/>
<dbReference type="Proteomes" id="UP000001952">
    <property type="component" value="Chromosome"/>
</dbReference>
<dbReference type="GO" id="GO:0005886">
    <property type="term" value="C:plasma membrane"/>
    <property type="evidence" value="ECO:0007669"/>
    <property type="project" value="UniProtKB-SubCell"/>
</dbReference>
<dbReference type="GO" id="GO:0003677">
    <property type="term" value="F:DNA binding"/>
    <property type="evidence" value="ECO:0007669"/>
    <property type="project" value="UniProtKB-KW"/>
</dbReference>
<dbReference type="GO" id="GO:0008360">
    <property type="term" value="P:regulation of cell shape"/>
    <property type="evidence" value="ECO:0007669"/>
    <property type="project" value="UniProtKB-UniRule"/>
</dbReference>
<dbReference type="CDD" id="cd00093">
    <property type="entry name" value="HTH_XRE"/>
    <property type="match status" value="1"/>
</dbReference>
<dbReference type="FunFam" id="1.10.260.40:FF:000014">
    <property type="entry name" value="Cytoskeleton protein RodZ"/>
    <property type="match status" value="1"/>
</dbReference>
<dbReference type="Gene3D" id="1.10.260.40">
    <property type="entry name" value="lambda repressor-like DNA-binding domains"/>
    <property type="match status" value="1"/>
</dbReference>
<dbReference type="HAMAP" id="MF_02017">
    <property type="entry name" value="RodZ"/>
    <property type="match status" value="1"/>
</dbReference>
<dbReference type="InterPro" id="IPR050400">
    <property type="entry name" value="Bact_Cytoskel_RodZ"/>
</dbReference>
<dbReference type="InterPro" id="IPR001387">
    <property type="entry name" value="Cro/C1-type_HTH"/>
</dbReference>
<dbReference type="InterPro" id="IPR010982">
    <property type="entry name" value="Lambda_DNA-bd_dom_sf"/>
</dbReference>
<dbReference type="InterPro" id="IPR023690">
    <property type="entry name" value="RodZ"/>
</dbReference>
<dbReference type="InterPro" id="IPR025194">
    <property type="entry name" value="RodZ-like_C"/>
</dbReference>
<dbReference type="NCBIfam" id="NF008109">
    <property type="entry name" value="PRK10856.1"/>
    <property type="match status" value="1"/>
</dbReference>
<dbReference type="PANTHER" id="PTHR34475">
    <property type="match status" value="1"/>
</dbReference>
<dbReference type="PANTHER" id="PTHR34475:SF1">
    <property type="entry name" value="CYTOSKELETON PROTEIN RODZ"/>
    <property type="match status" value="1"/>
</dbReference>
<dbReference type="Pfam" id="PF13413">
    <property type="entry name" value="HTH_25"/>
    <property type="match status" value="1"/>
</dbReference>
<dbReference type="Pfam" id="PF13464">
    <property type="entry name" value="RodZ_C"/>
    <property type="match status" value="1"/>
</dbReference>
<dbReference type="SMART" id="SM00530">
    <property type="entry name" value="HTH_XRE"/>
    <property type="match status" value="1"/>
</dbReference>
<dbReference type="SUPFAM" id="SSF47413">
    <property type="entry name" value="lambda repressor-like DNA-binding domains"/>
    <property type="match status" value="1"/>
</dbReference>
<dbReference type="PROSITE" id="PS50943">
    <property type="entry name" value="HTH_CROC1"/>
    <property type="match status" value="1"/>
</dbReference>
<sequence length="335" mass="36127">MNTEATHDQNEALTTGARLRNAREQLGLSQQAVAERLCLKVSTVRDIEEDKAPADLASTFLRGYIRSYARLVHIPEEELLPGLEKQAPLRAAKVAPMQSFSLGKRRKKRDGWLMTFTWLVLFVVIGLSGAWWWQDHKAQQEEITTMADQSSAELNNNQSQSVPLDTSTTTDQAMATTPTSPVDTTATNTQTPAVTAPAPAVDPQQNAVVPPSQANVDTAATPAPAATTTPDGAAPLPTDQAGVTTPAVDPNALVMNFTADCWLEVTDATGKKLFSGMQRKDGNLNLTGQAPYKLKIGAPAAVQIQYQGKPVDLSRFIRTNQVARLTLNAEQSPAQ</sequence>
<feature type="chain" id="PRO_0000361837" description="Cytoskeleton protein RodZ">
    <location>
        <begin position="1"/>
        <end position="335"/>
    </location>
</feature>
<feature type="topological domain" description="Cytoplasmic" evidence="1">
    <location>
        <begin position="1"/>
        <end position="111"/>
    </location>
</feature>
<feature type="transmembrane region" description="Helical; Signal-anchor for type II membrane protein" evidence="1">
    <location>
        <begin position="112"/>
        <end position="132"/>
    </location>
</feature>
<feature type="topological domain" description="Periplasmic" evidence="1">
    <location>
        <begin position="133"/>
        <end position="335"/>
    </location>
</feature>
<feature type="domain" description="HTH cro/C1-type" evidence="1">
    <location>
        <begin position="19"/>
        <end position="71"/>
    </location>
</feature>
<feature type="DNA-binding region" description="H-T-H motif" evidence="1">
    <location>
        <begin position="30"/>
        <end position="49"/>
    </location>
</feature>
<feature type="region of interest" description="Disordered" evidence="2">
    <location>
        <begin position="148"/>
        <end position="244"/>
    </location>
</feature>
<feature type="compositionally biased region" description="Polar residues" evidence="2">
    <location>
        <begin position="148"/>
        <end position="164"/>
    </location>
</feature>
<feature type="compositionally biased region" description="Low complexity" evidence="2">
    <location>
        <begin position="165"/>
        <end position="205"/>
    </location>
</feature>
<feature type="compositionally biased region" description="Low complexity" evidence="2">
    <location>
        <begin position="217"/>
        <end position="239"/>
    </location>
</feature>
<organism>
    <name type="scientific">Escherichia coli (strain UTI89 / UPEC)</name>
    <dbReference type="NCBI Taxonomy" id="364106"/>
    <lineage>
        <taxon>Bacteria</taxon>
        <taxon>Pseudomonadati</taxon>
        <taxon>Pseudomonadota</taxon>
        <taxon>Gammaproteobacteria</taxon>
        <taxon>Enterobacterales</taxon>
        <taxon>Enterobacteriaceae</taxon>
        <taxon>Escherichia</taxon>
    </lineage>
</organism>